<comment type="function">
    <text evidence="1">Transfers the gamma-phosphate of ATP to the 4'-position of a tetraacyldisaccharide 1-phosphate intermediate (termed DS-1-P) to form tetraacyldisaccharide 1,4'-bis-phosphate (lipid IVA).</text>
</comment>
<comment type="catalytic activity">
    <reaction evidence="1">
        <text>a lipid A disaccharide + ATP = a lipid IVA + ADP + H(+)</text>
        <dbReference type="Rhea" id="RHEA:67840"/>
        <dbReference type="ChEBI" id="CHEBI:15378"/>
        <dbReference type="ChEBI" id="CHEBI:30616"/>
        <dbReference type="ChEBI" id="CHEBI:176343"/>
        <dbReference type="ChEBI" id="CHEBI:176425"/>
        <dbReference type="ChEBI" id="CHEBI:456216"/>
        <dbReference type="EC" id="2.7.1.130"/>
    </reaction>
</comment>
<comment type="pathway">
    <text evidence="1">Glycolipid biosynthesis; lipid IV(A) biosynthesis; lipid IV(A) from (3R)-3-hydroxytetradecanoyl-[acyl-carrier-protein] and UDP-N-acetyl-alpha-D-glucosamine: step 6/6.</text>
</comment>
<comment type="similarity">
    <text evidence="1">Belongs to the LpxK family.</text>
</comment>
<organism>
    <name type="scientific">Methylorubrum populi (strain ATCC BAA-705 / NCIMB 13946 / BJ001)</name>
    <name type="common">Methylobacterium populi</name>
    <dbReference type="NCBI Taxonomy" id="441620"/>
    <lineage>
        <taxon>Bacteria</taxon>
        <taxon>Pseudomonadati</taxon>
        <taxon>Pseudomonadota</taxon>
        <taxon>Alphaproteobacteria</taxon>
        <taxon>Hyphomicrobiales</taxon>
        <taxon>Methylobacteriaceae</taxon>
        <taxon>Methylorubrum</taxon>
    </lineage>
</organism>
<sequence>MRPPGFWSRPPTHPLARILAPVGRIYGGLTADRMDRPGAAPPCPVLCVGNFTLGGAGKTPTALALAGLLRDLGRTPAFLSRGYGGRLSGPVIVDPARHRAEEVGDEPLLLARAATAVVARDRPAGARLCAGSGADVIVMDDGLQNPSLSKSLSLAVIDGGAVIGNGLPFPAGPLRAPLLRQWRHVAGLVLIGEGMAGSGVAAEAEAQGLPVHRARLVPEGGADWAGRRVVAFAGIGRPQKFFETLRALGAEIVAERAFPDHHPYRPRDWAALTALAAREGGDLVTTAKDAVRLPPEARGAVAVLTVALAFDDEAGLRRQLAAALPRA</sequence>
<gene>
    <name evidence="1" type="primary">lpxK</name>
    <name type="ordered locus">Mpop_3151</name>
</gene>
<evidence type="ECO:0000255" key="1">
    <source>
        <dbReference type="HAMAP-Rule" id="MF_00409"/>
    </source>
</evidence>
<accession>B1ZHI5</accession>
<protein>
    <recommendedName>
        <fullName evidence="1">Tetraacyldisaccharide 4'-kinase</fullName>
        <ecNumber evidence="1">2.7.1.130</ecNumber>
    </recommendedName>
    <alternativeName>
        <fullName evidence="1">Lipid A 4'-kinase</fullName>
    </alternativeName>
</protein>
<dbReference type="EC" id="2.7.1.130" evidence="1"/>
<dbReference type="EMBL" id="CP001029">
    <property type="protein sequence ID" value="ACB81303.1"/>
    <property type="molecule type" value="Genomic_DNA"/>
</dbReference>
<dbReference type="RefSeq" id="WP_012455020.1">
    <property type="nucleotide sequence ID" value="NC_010725.1"/>
</dbReference>
<dbReference type="SMR" id="B1ZHI5"/>
<dbReference type="STRING" id="441620.Mpop_3151"/>
<dbReference type="KEGG" id="mpo:Mpop_3151"/>
<dbReference type="eggNOG" id="COG1663">
    <property type="taxonomic scope" value="Bacteria"/>
</dbReference>
<dbReference type="HOGENOM" id="CLU_038816_0_0_5"/>
<dbReference type="OrthoDB" id="9766423at2"/>
<dbReference type="UniPathway" id="UPA00359">
    <property type="reaction ID" value="UER00482"/>
</dbReference>
<dbReference type="Proteomes" id="UP000007136">
    <property type="component" value="Chromosome"/>
</dbReference>
<dbReference type="GO" id="GO:0005886">
    <property type="term" value="C:plasma membrane"/>
    <property type="evidence" value="ECO:0007669"/>
    <property type="project" value="TreeGrafter"/>
</dbReference>
<dbReference type="GO" id="GO:0005524">
    <property type="term" value="F:ATP binding"/>
    <property type="evidence" value="ECO:0007669"/>
    <property type="project" value="UniProtKB-UniRule"/>
</dbReference>
<dbReference type="GO" id="GO:0009029">
    <property type="term" value="F:tetraacyldisaccharide 4'-kinase activity"/>
    <property type="evidence" value="ECO:0007669"/>
    <property type="project" value="UniProtKB-UniRule"/>
</dbReference>
<dbReference type="GO" id="GO:0009245">
    <property type="term" value="P:lipid A biosynthetic process"/>
    <property type="evidence" value="ECO:0007669"/>
    <property type="project" value="UniProtKB-UniRule"/>
</dbReference>
<dbReference type="GO" id="GO:0009244">
    <property type="term" value="P:lipopolysaccharide core region biosynthetic process"/>
    <property type="evidence" value="ECO:0007669"/>
    <property type="project" value="TreeGrafter"/>
</dbReference>
<dbReference type="HAMAP" id="MF_00409">
    <property type="entry name" value="LpxK"/>
    <property type="match status" value="1"/>
</dbReference>
<dbReference type="InterPro" id="IPR003758">
    <property type="entry name" value="LpxK"/>
</dbReference>
<dbReference type="InterPro" id="IPR027417">
    <property type="entry name" value="P-loop_NTPase"/>
</dbReference>
<dbReference type="NCBIfam" id="TIGR00682">
    <property type="entry name" value="lpxK"/>
    <property type="match status" value="1"/>
</dbReference>
<dbReference type="PANTHER" id="PTHR42724">
    <property type="entry name" value="TETRAACYLDISACCHARIDE 4'-KINASE"/>
    <property type="match status" value="1"/>
</dbReference>
<dbReference type="PANTHER" id="PTHR42724:SF1">
    <property type="entry name" value="TETRAACYLDISACCHARIDE 4'-KINASE, MITOCHONDRIAL-RELATED"/>
    <property type="match status" value="1"/>
</dbReference>
<dbReference type="Pfam" id="PF02606">
    <property type="entry name" value="LpxK"/>
    <property type="match status" value="1"/>
</dbReference>
<dbReference type="SUPFAM" id="SSF52540">
    <property type="entry name" value="P-loop containing nucleoside triphosphate hydrolases"/>
    <property type="match status" value="1"/>
</dbReference>
<feature type="chain" id="PRO_1000134746" description="Tetraacyldisaccharide 4'-kinase">
    <location>
        <begin position="1"/>
        <end position="327"/>
    </location>
</feature>
<feature type="binding site" evidence="1">
    <location>
        <begin position="52"/>
        <end position="59"/>
    </location>
    <ligand>
        <name>ATP</name>
        <dbReference type="ChEBI" id="CHEBI:30616"/>
    </ligand>
</feature>
<reference key="1">
    <citation type="submission" date="2008-04" db="EMBL/GenBank/DDBJ databases">
        <title>Complete sequence of chromosome of Methylobacterium populi BJ001.</title>
        <authorList>
            <consortium name="US DOE Joint Genome Institute"/>
            <person name="Copeland A."/>
            <person name="Lucas S."/>
            <person name="Lapidus A."/>
            <person name="Glavina del Rio T."/>
            <person name="Dalin E."/>
            <person name="Tice H."/>
            <person name="Bruce D."/>
            <person name="Goodwin L."/>
            <person name="Pitluck S."/>
            <person name="Chertkov O."/>
            <person name="Brettin T."/>
            <person name="Detter J.C."/>
            <person name="Han C."/>
            <person name="Kuske C.R."/>
            <person name="Schmutz J."/>
            <person name="Larimer F."/>
            <person name="Land M."/>
            <person name="Hauser L."/>
            <person name="Kyrpides N."/>
            <person name="Mikhailova N."/>
            <person name="Marx C."/>
            <person name="Richardson P."/>
        </authorList>
    </citation>
    <scope>NUCLEOTIDE SEQUENCE [LARGE SCALE GENOMIC DNA]</scope>
    <source>
        <strain>ATCC BAA-705 / NCIMB 13946 / BJ001</strain>
    </source>
</reference>
<proteinExistence type="inferred from homology"/>
<name>LPXK_METPB</name>
<keyword id="KW-0067">ATP-binding</keyword>
<keyword id="KW-0418">Kinase</keyword>
<keyword id="KW-0441">Lipid A biosynthesis</keyword>
<keyword id="KW-0444">Lipid biosynthesis</keyword>
<keyword id="KW-0443">Lipid metabolism</keyword>
<keyword id="KW-0547">Nucleotide-binding</keyword>
<keyword id="KW-0808">Transferase</keyword>